<accession>Q73XY1</accession>
<sequence>MVHAPARSEDIREEVAELLGVDVDAVQPGSNLIGQGLDSIRIMTLAGRWRRRGIAVDFATLAETPTIEAWAQLVTAGRQDTDSAAPPADSSGDPSGETEPFALAPMQHAMWVGRQDNQQLGGVAGHLYVEFDAGLLDSGRLRAAATALARRHPMLRVRFLPDGTQCITPAVECGDFPVHVEDLRELGTDEVERRLTALREAKSHQQLDGAVFELTVTLLPGGRSRLHVDLDMQAADAMSYRTLMADLAALYRGCDLPELSYTYRQYRHAVEAQDAQPQPRRDADRDWWARRLPELPDPPALPITAGRGANRSTRRWHWLDPQTRDALFARAQARGITPAMALAAGFANTLARWSSNSRFLLNVPLFGRQPLHPDVDALVGDFTSSLLLDVDLVGAHTAAARAQVVQDAMRTAAAHSAYSGLSVLRDLSRHRGTQVLAPVVFTSALGLGELFSPEVTGQFGTPAWIISQGPQVLLDAQVTEFDGGVLVNWDVREGFFPPGVIDAMFAYHIDELLRLASADDAWDAPGPAALPEAQRAVREAINGRTAPPSGEALHDRFFRQAERQPDAPAVFAGSGDLSYAQLRDQALAVAAALRAAGAGAGDTVAVVGPKSAEQIPAVLGILSVGAAYLPIGADQPRDRAERILQSGRVRLALVCGGRQLSLPVPGLVLADVLGGAPADAEIACARVDPGELAYVLFTSGSTGEPKGVEVTHDAAMNTVEFIGRHFEIGPADRCLALSTLEGDISVMDVFVTLRTGGAIVVVDEAQRRDPDAWARLIDTHRVTVLHFMPGWLEMLVEVGRGRLSSVRVVPTGGDWVRPEVVRRLRAEAPGLRFAGLGGATETPVHNTIFEVTEPIPADWTALPFGVPLPNNVCRVVGDTGGDCPEWVPGELWVSGRGIARGYRGRPDLTAQRFVEHDGRTSYRTGDLVRYRPDGTLEFVGRADHRVKISGYRVELGEIESALRRVPGVRTAVAALIAGAGESDVLAAQVGTDDPALTGEQVRQYLADLVPAHMIPRHVAVVERIGFTAAGKLDRRAVARELHSVVGQSHSPGHRAASTPLEGALALILGDLLGRDDVGVDDDFFALGGDSVLATQAVARIRAWLDAPDVMVADMFANRTVSALAAVLRAAEDDPDRLDHVAELYLEVIGMDAESVLTATRQTTKS</sequence>
<evidence type="ECO:0000250" key="1"/>
<evidence type="ECO:0000255" key="2">
    <source>
        <dbReference type="PROSITE-ProRule" id="PRU00258"/>
    </source>
</evidence>
<evidence type="ECO:0000256" key="3">
    <source>
        <dbReference type="SAM" id="MobiDB-lite"/>
    </source>
</evidence>
<evidence type="ECO:0000305" key="4"/>
<name>MBTB_MYCPA</name>
<comment type="function">
    <text evidence="1">Involved in the initial steps of the mycobactin biosynthetic pathway. Putatively couples activated salicylic acid with serine or threonine and cyclizes this precursor to the hydroxyphenyloxazoline ring system present in this class of siderophores (By similarity).</text>
</comment>
<comment type="cofactor">
    <cofactor evidence="1">
        <name>pantetheine 4'-phosphate</name>
        <dbReference type="ChEBI" id="CHEBI:47942"/>
    </cofactor>
    <text evidence="1">Binds 2 phosphopantetheines covalently.</text>
</comment>
<comment type="pathway">
    <text>Siderophore biosynthesis; mycobactin biosynthesis.</text>
</comment>
<comment type="domain">
    <text evidence="1">Modular protein that contains an aryl carrier protein (ArCP) domain which bears a phosphopantetheinyl arm to attach the activated salicylic acid, a condensation/cyclization domain involved in the formation of the oxazoline ring, an adenylation domain which activates the serine or threonine residue into an aminoacyl-AMP ester, and a peptidyl carrier protein (PCP) domain which bears a phosphopantetheinyl arm to attach the activated serine or threonine.</text>
</comment>
<comment type="PTM">
    <text evidence="1">4'-phosphopantetheine is transferred from CoA to a specific serine in each of the two carrier protein domains, leading to their activation from apo to holo forms.</text>
</comment>
<comment type="similarity">
    <text evidence="4">Belongs to the ATP-dependent AMP-binding enzyme family. MbtB subfamily.</text>
</comment>
<protein>
    <recommendedName>
        <fullName>Phenyloxazoline synthase MbtB</fullName>
        <ecNumber>6.3.2.-</ecNumber>
    </recommendedName>
    <alternativeName>
        <fullName>Mycobactin synthetase protein B</fullName>
    </alternativeName>
</protein>
<reference key="1">
    <citation type="journal article" date="2005" name="Proc. Natl. Acad. Sci. U.S.A.">
        <title>The complete genome sequence of Mycobacterium avium subspecies paratuberculosis.</title>
        <authorList>
            <person name="Li L."/>
            <person name="Bannantine J.P."/>
            <person name="Zhang Q."/>
            <person name="Amonsin A."/>
            <person name="May B.J."/>
            <person name="Alt D."/>
            <person name="Banerji N."/>
            <person name="Kanjilal S."/>
            <person name="Kapur V."/>
        </authorList>
    </citation>
    <scope>NUCLEOTIDE SEQUENCE [LARGE SCALE GENOMIC DNA]</scope>
    <source>
        <strain>ATCC BAA-968 / K-10</strain>
    </source>
</reference>
<organism>
    <name type="scientific">Mycolicibacterium paratuberculosis (strain ATCC BAA-968 / K-10)</name>
    <name type="common">Mycobacterium paratuberculosis</name>
    <dbReference type="NCBI Taxonomy" id="262316"/>
    <lineage>
        <taxon>Bacteria</taxon>
        <taxon>Bacillati</taxon>
        <taxon>Actinomycetota</taxon>
        <taxon>Actinomycetes</taxon>
        <taxon>Mycobacteriales</taxon>
        <taxon>Mycobacteriaceae</taxon>
        <taxon>Mycobacterium</taxon>
        <taxon>Mycobacterium avium complex (MAC)</taxon>
    </lineage>
</organism>
<keyword id="KW-0436">Ligase</keyword>
<keyword id="KW-0511">Multifunctional enzyme</keyword>
<keyword id="KW-0596">Phosphopantetheine</keyword>
<keyword id="KW-0597">Phosphoprotein</keyword>
<keyword id="KW-1185">Reference proteome</keyword>
<keyword id="KW-0677">Repeat</keyword>
<dbReference type="EC" id="6.3.2.-"/>
<dbReference type="EMBL" id="AE016958">
    <property type="protein sequence ID" value="AAS04494.1"/>
    <property type="molecule type" value="Genomic_DNA"/>
</dbReference>
<dbReference type="RefSeq" id="WP_010949506.1">
    <property type="nucleotide sequence ID" value="NZ_CP106873.1"/>
</dbReference>
<dbReference type="SMR" id="Q73XY1"/>
<dbReference type="STRING" id="262316.MAP_2177c"/>
<dbReference type="KEGG" id="mpa:MAP_2177c"/>
<dbReference type="PATRIC" id="fig|262316.17.peg.2315"/>
<dbReference type="eggNOG" id="COG1020">
    <property type="taxonomic scope" value="Bacteria"/>
</dbReference>
<dbReference type="HOGENOM" id="CLU_000022_2_4_11"/>
<dbReference type="UniPathway" id="UPA00011"/>
<dbReference type="Proteomes" id="UP000000580">
    <property type="component" value="Chromosome"/>
</dbReference>
<dbReference type="GO" id="GO:0005737">
    <property type="term" value="C:cytoplasm"/>
    <property type="evidence" value="ECO:0007669"/>
    <property type="project" value="TreeGrafter"/>
</dbReference>
<dbReference type="GO" id="GO:0016874">
    <property type="term" value="F:ligase activity"/>
    <property type="evidence" value="ECO:0007669"/>
    <property type="project" value="UniProtKB-KW"/>
</dbReference>
<dbReference type="GO" id="GO:0031177">
    <property type="term" value="F:phosphopantetheine binding"/>
    <property type="evidence" value="ECO:0007669"/>
    <property type="project" value="InterPro"/>
</dbReference>
<dbReference type="GO" id="GO:0043041">
    <property type="term" value="P:amino acid activation for nonribosomal peptide biosynthetic process"/>
    <property type="evidence" value="ECO:0007669"/>
    <property type="project" value="TreeGrafter"/>
</dbReference>
<dbReference type="GO" id="GO:0008610">
    <property type="term" value="P:lipid biosynthetic process"/>
    <property type="evidence" value="ECO:0007669"/>
    <property type="project" value="UniProtKB-ARBA"/>
</dbReference>
<dbReference type="GO" id="GO:0044550">
    <property type="term" value="P:secondary metabolite biosynthetic process"/>
    <property type="evidence" value="ECO:0007669"/>
    <property type="project" value="TreeGrafter"/>
</dbReference>
<dbReference type="CDD" id="cd19535">
    <property type="entry name" value="Cyc_NRPS"/>
    <property type="match status" value="1"/>
</dbReference>
<dbReference type="FunFam" id="1.10.1200.10:FF:000016">
    <property type="entry name" value="Non-ribosomal peptide synthase"/>
    <property type="match status" value="1"/>
</dbReference>
<dbReference type="FunFam" id="3.30.559.10:FF:000023">
    <property type="entry name" value="Non-ribosomal peptide synthetase"/>
    <property type="match status" value="1"/>
</dbReference>
<dbReference type="FunFam" id="3.40.50.12780:FF:000012">
    <property type="entry name" value="Non-ribosomal peptide synthetase"/>
    <property type="match status" value="1"/>
</dbReference>
<dbReference type="FunFam" id="3.30.559.30:FF:000006">
    <property type="entry name" value="Yersiniabactin polyketide/non-ribosomal peptide synthetase"/>
    <property type="match status" value="1"/>
</dbReference>
<dbReference type="Gene3D" id="3.30.300.30">
    <property type="match status" value="1"/>
</dbReference>
<dbReference type="Gene3D" id="1.10.1200.10">
    <property type="entry name" value="ACP-like"/>
    <property type="match status" value="1"/>
</dbReference>
<dbReference type="Gene3D" id="3.40.50.1820">
    <property type="entry name" value="alpha/beta hydrolase"/>
    <property type="match status" value="1"/>
</dbReference>
<dbReference type="Gene3D" id="3.30.559.10">
    <property type="entry name" value="Chloramphenicol acetyltransferase-like domain"/>
    <property type="match status" value="1"/>
</dbReference>
<dbReference type="Gene3D" id="3.40.50.12780">
    <property type="entry name" value="N-terminal domain of ligase-like"/>
    <property type="match status" value="1"/>
</dbReference>
<dbReference type="Gene3D" id="3.30.559.30">
    <property type="entry name" value="Nonribosomal peptide synthetase, condensation domain"/>
    <property type="match status" value="1"/>
</dbReference>
<dbReference type="InterPro" id="IPR010071">
    <property type="entry name" value="AA_adenyl_dom"/>
</dbReference>
<dbReference type="InterPro" id="IPR029058">
    <property type="entry name" value="AB_hydrolase_fold"/>
</dbReference>
<dbReference type="InterPro" id="IPR036736">
    <property type="entry name" value="ACP-like_sf"/>
</dbReference>
<dbReference type="InterPro" id="IPR045851">
    <property type="entry name" value="AMP-bd_C_sf"/>
</dbReference>
<dbReference type="InterPro" id="IPR020845">
    <property type="entry name" value="AMP-binding_CS"/>
</dbReference>
<dbReference type="InterPro" id="IPR000873">
    <property type="entry name" value="AMP-dep_synth/lig_dom"/>
</dbReference>
<dbReference type="InterPro" id="IPR042099">
    <property type="entry name" value="ANL_N_sf"/>
</dbReference>
<dbReference type="InterPro" id="IPR023213">
    <property type="entry name" value="CAT-like_dom_sf"/>
</dbReference>
<dbReference type="InterPro" id="IPR001242">
    <property type="entry name" value="Condensatn"/>
</dbReference>
<dbReference type="InterPro" id="IPR020806">
    <property type="entry name" value="PKS_PP-bd"/>
</dbReference>
<dbReference type="InterPro" id="IPR009081">
    <property type="entry name" value="PP-bd_ACP"/>
</dbReference>
<dbReference type="InterPro" id="IPR006162">
    <property type="entry name" value="Ppantetheine_attach_site"/>
</dbReference>
<dbReference type="NCBIfam" id="TIGR01733">
    <property type="entry name" value="AA-adenyl-dom"/>
    <property type="match status" value="1"/>
</dbReference>
<dbReference type="PANTHER" id="PTHR45527:SF1">
    <property type="entry name" value="FATTY ACID SYNTHASE"/>
    <property type="match status" value="1"/>
</dbReference>
<dbReference type="PANTHER" id="PTHR45527">
    <property type="entry name" value="NONRIBOSOMAL PEPTIDE SYNTHETASE"/>
    <property type="match status" value="1"/>
</dbReference>
<dbReference type="Pfam" id="PF00501">
    <property type="entry name" value="AMP-binding"/>
    <property type="match status" value="1"/>
</dbReference>
<dbReference type="Pfam" id="PF00668">
    <property type="entry name" value="Condensation"/>
    <property type="match status" value="1"/>
</dbReference>
<dbReference type="Pfam" id="PF00550">
    <property type="entry name" value="PP-binding"/>
    <property type="match status" value="2"/>
</dbReference>
<dbReference type="SMART" id="SM00823">
    <property type="entry name" value="PKS_PP"/>
    <property type="match status" value="2"/>
</dbReference>
<dbReference type="SUPFAM" id="SSF56801">
    <property type="entry name" value="Acetyl-CoA synthetase-like"/>
    <property type="match status" value="1"/>
</dbReference>
<dbReference type="SUPFAM" id="SSF47336">
    <property type="entry name" value="ACP-like"/>
    <property type="match status" value="2"/>
</dbReference>
<dbReference type="SUPFAM" id="SSF52777">
    <property type="entry name" value="CoA-dependent acyltransferases"/>
    <property type="match status" value="2"/>
</dbReference>
<dbReference type="PROSITE" id="PS00455">
    <property type="entry name" value="AMP_BINDING"/>
    <property type="match status" value="1"/>
</dbReference>
<dbReference type="PROSITE" id="PS50075">
    <property type="entry name" value="CARRIER"/>
    <property type="match status" value="2"/>
</dbReference>
<dbReference type="PROSITE" id="PS00012">
    <property type="entry name" value="PHOSPHOPANTETHEINE"/>
    <property type="match status" value="1"/>
</dbReference>
<gene>
    <name type="primary">mbtB</name>
    <name type="ordered locus">MAP_2177c</name>
</gene>
<proteinExistence type="inferred from homology"/>
<feature type="chain" id="PRO_0000261307" description="Phenyloxazoline synthase MbtB">
    <location>
        <begin position="1"/>
        <end position="1165"/>
    </location>
</feature>
<feature type="domain" description="Carrier 1" evidence="2">
    <location>
        <begin position="5"/>
        <end position="78"/>
    </location>
</feature>
<feature type="domain" description="Carrier 2" evidence="2">
    <location>
        <begin position="1055"/>
        <end position="1131"/>
    </location>
</feature>
<feature type="region of interest" description="Disordered" evidence="3">
    <location>
        <begin position="77"/>
        <end position="100"/>
    </location>
</feature>
<feature type="region of interest" description="Condensation/cyclization">
    <location>
        <begin position="97"/>
        <end position="393"/>
    </location>
</feature>
<feature type="region of interest" description="Adenylation">
    <location>
        <begin position="578"/>
        <end position="973"/>
    </location>
</feature>
<feature type="modified residue" description="O-(pantetheine 4'-phosphoryl)serine" evidence="2">
    <location>
        <position position="39"/>
    </location>
</feature>
<feature type="modified residue" description="O-(pantetheine 4'-phosphoryl)serine" evidence="2">
    <location>
        <position position="1090"/>
    </location>
</feature>